<organism>
    <name type="scientific">Bacillus subtilis (strain 168)</name>
    <dbReference type="NCBI Taxonomy" id="224308"/>
    <lineage>
        <taxon>Bacteria</taxon>
        <taxon>Bacillati</taxon>
        <taxon>Bacillota</taxon>
        <taxon>Bacilli</taxon>
        <taxon>Bacillales</taxon>
        <taxon>Bacillaceae</taxon>
        <taxon>Bacillus</taxon>
    </lineage>
</organism>
<evidence type="ECO:0000255" key="1"/>
<evidence type="ECO:0000255" key="2">
    <source>
        <dbReference type="PROSITE-ProRule" id="PRU00258"/>
    </source>
</evidence>
<evidence type="ECO:0000255" key="3">
    <source>
        <dbReference type="PROSITE-ProRule" id="PRU01348"/>
    </source>
</evidence>
<evidence type="ECO:0000255" key="4">
    <source>
        <dbReference type="PROSITE-ProRule" id="PRU01363"/>
    </source>
</evidence>
<evidence type="ECO:0000269" key="5">
    <source>
    </source>
</evidence>
<evidence type="ECO:0000269" key="6">
    <source>
    </source>
</evidence>
<evidence type="ECO:0000269" key="7">
    <source>
    </source>
</evidence>
<evidence type="ECO:0000305" key="8"/>
<accession>O31782</accession>
<proteinExistence type="evidence at protein level"/>
<name>PKSN_BACSU</name>
<reference key="1">
    <citation type="journal article" date="1997" name="Nature">
        <title>The complete genome sequence of the Gram-positive bacterium Bacillus subtilis.</title>
        <authorList>
            <person name="Kunst F."/>
            <person name="Ogasawara N."/>
            <person name="Moszer I."/>
            <person name="Albertini A.M."/>
            <person name="Alloni G."/>
            <person name="Azevedo V."/>
            <person name="Bertero M.G."/>
            <person name="Bessieres P."/>
            <person name="Bolotin A."/>
            <person name="Borchert S."/>
            <person name="Borriss R."/>
            <person name="Boursier L."/>
            <person name="Brans A."/>
            <person name="Braun M."/>
            <person name="Brignell S.C."/>
            <person name="Bron S."/>
            <person name="Brouillet S."/>
            <person name="Bruschi C.V."/>
            <person name="Caldwell B."/>
            <person name="Capuano V."/>
            <person name="Carter N.M."/>
            <person name="Choi S.-K."/>
            <person name="Codani J.-J."/>
            <person name="Connerton I.F."/>
            <person name="Cummings N.J."/>
            <person name="Daniel R.A."/>
            <person name="Denizot F."/>
            <person name="Devine K.M."/>
            <person name="Duesterhoeft A."/>
            <person name="Ehrlich S.D."/>
            <person name="Emmerson P.T."/>
            <person name="Entian K.-D."/>
            <person name="Errington J."/>
            <person name="Fabret C."/>
            <person name="Ferrari E."/>
            <person name="Foulger D."/>
            <person name="Fritz C."/>
            <person name="Fujita M."/>
            <person name="Fujita Y."/>
            <person name="Fuma S."/>
            <person name="Galizzi A."/>
            <person name="Galleron N."/>
            <person name="Ghim S.-Y."/>
            <person name="Glaser P."/>
            <person name="Goffeau A."/>
            <person name="Golightly E.J."/>
            <person name="Grandi G."/>
            <person name="Guiseppi G."/>
            <person name="Guy B.J."/>
            <person name="Haga K."/>
            <person name="Haiech J."/>
            <person name="Harwood C.R."/>
            <person name="Henaut A."/>
            <person name="Hilbert H."/>
            <person name="Holsappel S."/>
            <person name="Hosono S."/>
            <person name="Hullo M.-F."/>
            <person name="Itaya M."/>
            <person name="Jones L.-M."/>
            <person name="Joris B."/>
            <person name="Karamata D."/>
            <person name="Kasahara Y."/>
            <person name="Klaerr-Blanchard M."/>
            <person name="Klein C."/>
            <person name="Kobayashi Y."/>
            <person name="Koetter P."/>
            <person name="Koningstein G."/>
            <person name="Krogh S."/>
            <person name="Kumano M."/>
            <person name="Kurita K."/>
            <person name="Lapidus A."/>
            <person name="Lardinois S."/>
            <person name="Lauber J."/>
            <person name="Lazarevic V."/>
            <person name="Lee S.-M."/>
            <person name="Levine A."/>
            <person name="Liu H."/>
            <person name="Masuda S."/>
            <person name="Mauel C."/>
            <person name="Medigue C."/>
            <person name="Medina N."/>
            <person name="Mellado R.P."/>
            <person name="Mizuno M."/>
            <person name="Moestl D."/>
            <person name="Nakai S."/>
            <person name="Noback M."/>
            <person name="Noone D."/>
            <person name="O'Reilly M."/>
            <person name="Ogawa K."/>
            <person name="Ogiwara A."/>
            <person name="Oudega B."/>
            <person name="Park S.-H."/>
            <person name="Parro V."/>
            <person name="Pohl T.M."/>
            <person name="Portetelle D."/>
            <person name="Porwollik S."/>
            <person name="Prescott A.M."/>
            <person name="Presecan E."/>
            <person name="Pujic P."/>
            <person name="Purnelle B."/>
            <person name="Rapoport G."/>
            <person name="Rey M."/>
            <person name="Reynolds S."/>
            <person name="Rieger M."/>
            <person name="Rivolta C."/>
            <person name="Rocha E."/>
            <person name="Roche B."/>
            <person name="Rose M."/>
            <person name="Sadaie Y."/>
            <person name="Sato T."/>
            <person name="Scanlan E."/>
            <person name="Schleich S."/>
            <person name="Schroeter R."/>
            <person name="Scoffone F."/>
            <person name="Sekiguchi J."/>
            <person name="Sekowska A."/>
            <person name="Seror S.J."/>
            <person name="Serror P."/>
            <person name="Shin B.-S."/>
            <person name="Soldo B."/>
            <person name="Sorokin A."/>
            <person name="Tacconi E."/>
            <person name="Takagi T."/>
            <person name="Takahashi H."/>
            <person name="Takemaru K."/>
            <person name="Takeuchi M."/>
            <person name="Tamakoshi A."/>
            <person name="Tanaka T."/>
            <person name="Terpstra P."/>
            <person name="Tognoni A."/>
            <person name="Tosato V."/>
            <person name="Uchiyama S."/>
            <person name="Vandenbol M."/>
            <person name="Vannier F."/>
            <person name="Vassarotti A."/>
            <person name="Viari A."/>
            <person name="Wambutt R."/>
            <person name="Wedler E."/>
            <person name="Wedler H."/>
            <person name="Weitzenegger T."/>
            <person name="Winters P."/>
            <person name="Wipat A."/>
            <person name="Yamamoto H."/>
            <person name="Yamane K."/>
            <person name="Yasumoto K."/>
            <person name="Yata K."/>
            <person name="Yoshida K."/>
            <person name="Yoshikawa H.-F."/>
            <person name="Zumstein E."/>
            <person name="Yoshikawa H."/>
            <person name="Danchin A."/>
        </authorList>
    </citation>
    <scope>NUCLEOTIDE SEQUENCE [LARGE SCALE GENOMIC DNA]</scope>
    <source>
        <strain>168</strain>
    </source>
</reference>
<reference key="2">
    <citation type="journal article" date="2009" name="Microbiology">
        <title>From a consortium sequence to a unified sequence: the Bacillus subtilis 168 reference genome a decade later.</title>
        <authorList>
            <person name="Barbe V."/>
            <person name="Cruveiller S."/>
            <person name="Kunst F."/>
            <person name="Lenoble P."/>
            <person name="Meurice G."/>
            <person name="Sekowska A."/>
            <person name="Vallenet D."/>
            <person name="Wang T."/>
            <person name="Moszer I."/>
            <person name="Medigue C."/>
            <person name="Danchin A."/>
        </authorList>
    </citation>
    <scope>SEQUENCE REVISION TO 1128-1129 AND 1703</scope>
</reference>
<reference key="3">
    <citation type="journal article" date="2006" name="Biochemistry">
        <title>Activity screening of carrier domains within nonribosomal peptide synthetases using complex substrate mixtures and large molecule mass spectrometry.</title>
        <authorList>
            <person name="Dorrestein P.C."/>
            <person name="Blackhall J."/>
            <person name="Straight P.D."/>
            <person name="Fischbach M.A."/>
            <person name="Garneau-Tsodikova S."/>
            <person name="Edwards D.J."/>
            <person name="McLaughlin S."/>
            <person name="Lin M."/>
            <person name="Gerwick W.H."/>
            <person name="Kolter R."/>
            <person name="Walsh C.T."/>
            <person name="Kelleher N.L."/>
        </authorList>
    </citation>
    <scope>FUNCTION AS AN ACYL CARRIER PROTEIN</scope>
    <scope>PHOSPHOPANTETHEINYLATION AT SER-1018</scope>
    <source>
        <strain>168 / Marburg / ATCC 6051 / DSM 10 / JCM 1465 / NBRC 13719 / NCIMB 3610 / NRRL NRS-744 / VKM B-501</strain>
    </source>
</reference>
<reference key="4">
    <citation type="journal article" date="2007" name="Proc. Natl. Acad. Sci. U.S.A.">
        <title>A singular enzymatic megacomplex from Bacillus subtilis.</title>
        <authorList>
            <person name="Straight P.D."/>
            <person name="Fischbach M.A."/>
            <person name="Walsh C.T."/>
            <person name="Rudner D.Z."/>
            <person name="Kolter R."/>
        </authorList>
    </citation>
    <scope>SUBCELLULAR LOCATION</scope>
    <source>
        <strain>168 / Marburg / ATCC 6051 / DSM 10 / JCM 1465 / NBRC 13719 / NCIMB 3610 / NRRL NRS-744 / VKM B-501</strain>
    </source>
</reference>
<reference key="5">
    <citation type="journal article" date="2007" name="Proc. Natl. Acad. Sci. U.S.A.">
        <title>The identification of bacillaene, the product of the PksX megacomplex in Bacillus subtilis.</title>
        <authorList>
            <person name="Butcher R.A."/>
            <person name="Schroeder F.C."/>
            <person name="Fischbach M.A."/>
            <person name="Straight P.D."/>
            <person name="Kolter R."/>
            <person name="Walsh C.T."/>
            <person name="Clardy J."/>
        </authorList>
    </citation>
    <scope>FUNCTION IN BACILLAENE BIOSYNTHESIS</scope>
    <source>
        <strain>168 / Marburg / ATCC 6051 / DSM 10 / JCM 1465 / NBRC 13719 / NCIMB 3610 / NRRL NRS-744 / VKM B-501</strain>
    </source>
</reference>
<dbReference type="EC" id="2.3.1.-"/>
<dbReference type="EMBL" id="AL009126">
    <property type="protein sequence ID" value="CAB13604.3"/>
    <property type="molecule type" value="Genomic_DNA"/>
</dbReference>
<dbReference type="RefSeq" id="NP_389602.3">
    <property type="nucleotide sequence ID" value="NC_000964.3"/>
</dbReference>
<dbReference type="RefSeq" id="WP_010886514.1">
    <property type="nucleotide sequence ID" value="NZ_OZ025638.1"/>
</dbReference>
<dbReference type="SMR" id="O31782"/>
<dbReference type="FunCoup" id="O31782">
    <property type="interactions" value="10"/>
</dbReference>
<dbReference type="STRING" id="224308.BSU17210"/>
<dbReference type="PaxDb" id="224308-BSU17210"/>
<dbReference type="EnsemblBacteria" id="CAB13604">
    <property type="protein sequence ID" value="CAB13604"/>
    <property type="gene ID" value="BSU_17210"/>
</dbReference>
<dbReference type="GeneID" id="940054"/>
<dbReference type="KEGG" id="bsu:BSU17210"/>
<dbReference type="PATRIC" id="fig|224308.43.peg.1817"/>
<dbReference type="eggNOG" id="COG1020">
    <property type="taxonomic scope" value="Bacteria"/>
</dbReference>
<dbReference type="eggNOG" id="COG1028">
    <property type="taxonomic scope" value="Bacteria"/>
</dbReference>
<dbReference type="eggNOG" id="COG3321">
    <property type="taxonomic scope" value="Bacteria"/>
</dbReference>
<dbReference type="eggNOG" id="COG4221">
    <property type="taxonomic scope" value="Bacteria"/>
</dbReference>
<dbReference type="InParanoid" id="O31782"/>
<dbReference type="OrthoDB" id="2897140at2"/>
<dbReference type="PhylomeDB" id="O31782"/>
<dbReference type="BioCyc" id="BSUB:BSU17210-MONOMER"/>
<dbReference type="UniPathway" id="UPA01003"/>
<dbReference type="Proteomes" id="UP000001570">
    <property type="component" value="Chromosome"/>
</dbReference>
<dbReference type="GO" id="GO:0005737">
    <property type="term" value="C:cytoplasm"/>
    <property type="evidence" value="ECO:0000318"/>
    <property type="project" value="GO_Central"/>
</dbReference>
<dbReference type="GO" id="GO:0004315">
    <property type="term" value="F:3-oxoacyl-[acyl-carrier-protein] synthase activity"/>
    <property type="evidence" value="ECO:0007669"/>
    <property type="project" value="InterPro"/>
</dbReference>
<dbReference type="GO" id="GO:0004312">
    <property type="term" value="F:fatty acid synthase activity"/>
    <property type="evidence" value="ECO:0000318"/>
    <property type="project" value="GO_Central"/>
</dbReference>
<dbReference type="GO" id="GO:0016874">
    <property type="term" value="F:ligase activity"/>
    <property type="evidence" value="ECO:0007669"/>
    <property type="project" value="UniProtKB-KW"/>
</dbReference>
<dbReference type="GO" id="GO:0031177">
    <property type="term" value="F:phosphopantetheine binding"/>
    <property type="evidence" value="ECO:0007669"/>
    <property type="project" value="InterPro"/>
</dbReference>
<dbReference type="GO" id="GO:0071770">
    <property type="term" value="P:DIM/DIP cell wall layer assembly"/>
    <property type="evidence" value="ECO:0000318"/>
    <property type="project" value="GO_Central"/>
</dbReference>
<dbReference type="GO" id="GO:0006633">
    <property type="term" value="P:fatty acid biosynthetic process"/>
    <property type="evidence" value="ECO:0000318"/>
    <property type="project" value="GO_Central"/>
</dbReference>
<dbReference type="GO" id="GO:0044550">
    <property type="term" value="P:secondary metabolite biosynthetic process"/>
    <property type="evidence" value="ECO:0007669"/>
    <property type="project" value="UniProtKB-ARBA"/>
</dbReference>
<dbReference type="CDD" id="cd05930">
    <property type="entry name" value="A_NRPS"/>
    <property type="match status" value="1"/>
</dbReference>
<dbReference type="CDD" id="cd20484">
    <property type="entry name" value="C_PKS-NRPS_PksJ-like"/>
    <property type="match status" value="1"/>
</dbReference>
<dbReference type="CDD" id="cd08953">
    <property type="entry name" value="KR_2_SDR_x"/>
    <property type="match status" value="3"/>
</dbReference>
<dbReference type="CDD" id="cd00833">
    <property type="entry name" value="PKS"/>
    <property type="match status" value="3"/>
</dbReference>
<dbReference type="FunFam" id="3.40.50.12780:FF:000012">
    <property type="entry name" value="Non-ribosomal peptide synthetase"/>
    <property type="match status" value="1"/>
</dbReference>
<dbReference type="FunFam" id="3.40.50.980:FF:000001">
    <property type="entry name" value="Non-ribosomal peptide synthetase"/>
    <property type="match status" value="1"/>
</dbReference>
<dbReference type="FunFam" id="2.30.38.10:FF:000001">
    <property type="entry name" value="Non-ribosomal peptide synthetase PvdI"/>
    <property type="match status" value="1"/>
</dbReference>
<dbReference type="FunFam" id="3.40.47.10:FF:000019">
    <property type="entry name" value="Polyketide synthase type I"/>
    <property type="match status" value="2"/>
</dbReference>
<dbReference type="Gene3D" id="1.10.1240.100">
    <property type="match status" value="3"/>
</dbReference>
<dbReference type="Gene3D" id="3.30.300.30">
    <property type="match status" value="1"/>
</dbReference>
<dbReference type="Gene3D" id="3.40.47.10">
    <property type="match status" value="3"/>
</dbReference>
<dbReference type="Gene3D" id="3.40.50.980">
    <property type="match status" value="2"/>
</dbReference>
<dbReference type="Gene3D" id="1.10.1200.10">
    <property type="entry name" value="ACP-like"/>
    <property type="match status" value="3"/>
</dbReference>
<dbReference type="Gene3D" id="3.30.559.10">
    <property type="entry name" value="Chloramphenicol acetyltransferase-like domain"/>
    <property type="match status" value="1"/>
</dbReference>
<dbReference type="Gene3D" id="2.30.38.10">
    <property type="entry name" value="Luciferase, Domain 3"/>
    <property type="match status" value="1"/>
</dbReference>
<dbReference type="Gene3D" id="3.40.50.720">
    <property type="entry name" value="NAD(P)-binding Rossmann-like Domain"/>
    <property type="match status" value="3"/>
</dbReference>
<dbReference type="Gene3D" id="3.30.559.30">
    <property type="entry name" value="Nonribosomal peptide synthetase, condensation domain"/>
    <property type="match status" value="1"/>
</dbReference>
<dbReference type="Gene3D" id="3.10.129.110">
    <property type="entry name" value="Polyketide synthase dehydratase"/>
    <property type="match status" value="3"/>
</dbReference>
<dbReference type="InterPro" id="IPR010071">
    <property type="entry name" value="AA_adenyl_dom"/>
</dbReference>
<dbReference type="InterPro" id="IPR036736">
    <property type="entry name" value="ACP-like_sf"/>
</dbReference>
<dbReference type="InterPro" id="IPR025110">
    <property type="entry name" value="AMP-bd_C"/>
</dbReference>
<dbReference type="InterPro" id="IPR045851">
    <property type="entry name" value="AMP-bd_C_sf"/>
</dbReference>
<dbReference type="InterPro" id="IPR020845">
    <property type="entry name" value="AMP-binding_CS"/>
</dbReference>
<dbReference type="InterPro" id="IPR000873">
    <property type="entry name" value="AMP-dep_synth/lig_dom"/>
</dbReference>
<dbReference type="InterPro" id="IPR023213">
    <property type="entry name" value="CAT-like_dom_sf"/>
</dbReference>
<dbReference type="InterPro" id="IPR001242">
    <property type="entry name" value="Condensatn"/>
</dbReference>
<dbReference type="InterPro" id="IPR018201">
    <property type="entry name" value="Ketoacyl_synth_AS"/>
</dbReference>
<dbReference type="InterPro" id="IPR014031">
    <property type="entry name" value="Ketoacyl_synth_C"/>
</dbReference>
<dbReference type="InterPro" id="IPR014030">
    <property type="entry name" value="Ketoacyl_synth_N"/>
</dbReference>
<dbReference type="InterPro" id="IPR036291">
    <property type="entry name" value="NAD(P)-bd_dom_sf"/>
</dbReference>
<dbReference type="InterPro" id="IPR020841">
    <property type="entry name" value="PKS_Beta-ketoAc_synthase_dom"/>
</dbReference>
<dbReference type="InterPro" id="IPR042104">
    <property type="entry name" value="PKS_dehydratase_sf"/>
</dbReference>
<dbReference type="InterPro" id="IPR020807">
    <property type="entry name" value="PKS_DH"/>
</dbReference>
<dbReference type="InterPro" id="IPR049551">
    <property type="entry name" value="PKS_DH_C"/>
</dbReference>
<dbReference type="InterPro" id="IPR049552">
    <property type="entry name" value="PKS_DH_N"/>
</dbReference>
<dbReference type="InterPro" id="IPR013968">
    <property type="entry name" value="PKS_KR"/>
</dbReference>
<dbReference type="InterPro" id="IPR049900">
    <property type="entry name" value="PKS_mFAS_DH"/>
</dbReference>
<dbReference type="InterPro" id="IPR050091">
    <property type="entry name" value="PKS_NRPS_Biosynth_Enz"/>
</dbReference>
<dbReference type="InterPro" id="IPR020806">
    <property type="entry name" value="PKS_PP-bd"/>
</dbReference>
<dbReference type="InterPro" id="IPR009081">
    <property type="entry name" value="PP-bd_ACP"/>
</dbReference>
<dbReference type="InterPro" id="IPR006162">
    <property type="entry name" value="Ppantetheine_attach_site"/>
</dbReference>
<dbReference type="InterPro" id="IPR054514">
    <property type="entry name" value="RhiE-like_linker"/>
</dbReference>
<dbReference type="InterPro" id="IPR016039">
    <property type="entry name" value="Thiolase-like"/>
</dbReference>
<dbReference type="NCBIfam" id="TIGR01733">
    <property type="entry name" value="AA-adenyl-dom"/>
    <property type="match status" value="1"/>
</dbReference>
<dbReference type="PANTHER" id="PTHR43775">
    <property type="entry name" value="FATTY ACID SYNTHASE"/>
    <property type="match status" value="1"/>
</dbReference>
<dbReference type="PANTHER" id="PTHR43775:SF37">
    <property type="entry name" value="SI:DKEY-61P9.11"/>
    <property type="match status" value="1"/>
</dbReference>
<dbReference type="Pfam" id="PF00501">
    <property type="entry name" value="AMP-binding"/>
    <property type="match status" value="1"/>
</dbReference>
<dbReference type="Pfam" id="PF13193">
    <property type="entry name" value="AMP-binding_C"/>
    <property type="match status" value="1"/>
</dbReference>
<dbReference type="Pfam" id="PF00668">
    <property type="entry name" value="Condensation"/>
    <property type="match status" value="1"/>
</dbReference>
<dbReference type="Pfam" id="PF00109">
    <property type="entry name" value="ketoacyl-synt"/>
    <property type="match status" value="3"/>
</dbReference>
<dbReference type="Pfam" id="PF02801">
    <property type="entry name" value="Ketoacyl-synt_C"/>
    <property type="match status" value="3"/>
</dbReference>
<dbReference type="Pfam" id="PF08659">
    <property type="entry name" value="KR"/>
    <property type="match status" value="3"/>
</dbReference>
<dbReference type="Pfam" id="PF21089">
    <property type="entry name" value="PKS_DH_N"/>
    <property type="match status" value="3"/>
</dbReference>
<dbReference type="Pfam" id="PF00550">
    <property type="entry name" value="PP-binding"/>
    <property type="match status" value="3"/>
</dbReference>
<dbReference type="Pfam" id="PF14765">
    <property type="entry name" value="PS-DH"/>
    <property type="match status" value="3"/>
</dbReference>
<dbReference type="Pfam" id="PF22336">
    <property type="entry name" value="RhiE-like_linker"/>
    <property type="match status" value="3"/>
</dbReference>
<dbReference type="SMART" id="SM00826">
    <property type="entry name" value="PKS_DH"/>
    <property type="match status" value="3"/>
</dbReference>
<dbReference type="SMART" id="SM00822">
    <property type="entry name" value="PKS_KR"/>
    <property type="match status" value="3"/>
</dbReference>
<dbReference type="SMART" id="SM00825">
    <property type="entry name" value="PKS_KS"/>
    <property type="match status" value="3"/>
</dbReference>
<dbReference type="SMART" id="SM00823">
    <property type="entry name" value="PKS_PP"/>
    <property type="match status" value="3"/>
</dbReference>
<dbReference type="SMART" id="SM01294">
    <property type="entry name" value="PKS_PP_betabranch"/>
    <property type="match status" value="2"/>
</dbReference>
<dbReference type="SUPFAM" id="SSF56801">
    <property type="entry name" value="Acetyl-CoA synthetase-like"/>
    <property type="match status" value="1"/>
</dbReference>
<dbReference type="SUPFAM" id="SSF47336">
    <property type="entry name" value="ACP-like"/>
    <property type="match status" value="3"/>
</dbReference>
<dbReference type="SUPFAM" id="SSF52777">
    <property type="entry name" value="CoA-dependent acyltransferases"/>
    <property type="match status" value="2"/>
</dbReference>
<dbReference type="SUPFAM" id="SSF51735">
    <property type="entry name" value="NAD(P)-binding Rossmann-fold domains"/>
    <property type="match status" value="4"/>
</dbReference>
<dbReference type="SUPFAM" id="SSF53901">
    <property type="entry name" value="Thiolase-like"/>
    <property type="match status" value="3"/>
</dbReference>
<dbReference type="PROSITE" id="PS00455">
    <property type="entry name" value="AMP_BINDING"/>
    <property type="match status" value="1"/>
</dbReference>
<dbReference type="PROSITE" id="PS50075">
    <property type="entry name" value="CARRIER"/>
    <property type="match status" value="3"/>
</dbReference>
<dbReference type="PROSITE" id="PS00606">
    <property type="entry name" value="KS3_1"/>
    <property type="match status" value="2"/>
</dbReference>
<dbReference type="PROSITE" id="PS52004">
    <property type="entry name" value="KS3_2"/>
    <property type="match status" value="3"/>
</dbReference>
<dbReference type="PROSITE" id="PS00012">
    <property type="entry name" value="PHOSPHOPANTETHEINE"/>
    <property type="match status" value="1"/>
</dbReference>
<dbReference type="PROSITE" id="PS52019">
    <property type="entry name" value="PKS_MFAS_DH"/>
    <property type="match status" value="3"/>
</dbReference>
<sequence>MKRQLKSPLSEGQKGLWMLQKMSPGMSAYNIPLCFRFSKPIHAETFKKALLFVQRQYPVLASVIQEENGIPFQSVQLSKDLYFVEEDISAMKSADIMPFLKEKAKEPFQLEAGPLWRTHLFHRLEECIVLITIHHIIFDGVSMLTLISALFEAYQQLLNGIEPLQQPSTADYYDFVDWENRMLTGREGEEHLAYWKEQLSGSLPVLDLPADRPRSSARKFKGQAYKSLLPHHLRNQIKSFARTNHVNESVVFLSIYKVLLHHYTKQKDIIVGVPTMGRQEDRFETLIGYFINMMAVRSKNIGSQPLTAFIRELQLTVAVGLDHAAFPFPALVRELNVDRSAADSPVFQTAFLYQNFFQATGLQKVLEPYQTLGIEYIEDIRQEGEFELALEIYEQENETVLHLLYNPDLYELSSIESMMENYMKLAQHMMEDPSLPLEAYSLQLNQEQTSLLEQWNATGTNIANDKCIHEVFEEKAKQTPDAVAVMFEDRSLTYKEVDEKSTSVAVYLQHQGVRPEQPVGICAERSFDMIIGILGILKAGGAYVPLDPSFPQERLKYMLKDSQASIVLTQPNVHDRISGLTGSHVKAINIELACRNGYTDQQSSGLKREVKPEHLAYIIYTSGSTGEPKGVMVEHRSIMNTLNFLESHYPVTAEDAYLLKTNYVFDVSISELFGWFIGDGRLVILPPNGEKSPQLCMDYIETYKVTHINFVPAMLHVFLEMAKDNKRFTEDGPLKYMMVAGEAFPKVLVKKAVSLFTNCRVENIYGPTEASIYAAYFGCGKGDIASHHTPIGKPVSNTKIYIVDQHLKPVPIGKPGELCIAGAGLARGYFKKPGLTAEKFIDNPFESGTKLYKSGDSARWLPDGNIEYLGRIDSQVKIRGFRVELGAIETKLGEFPGILDQAVVVKQLEGHQQLAAYYTEESGHASANPKDLRLHLKSSLPEYMIPSHFIRLDELPLSPSGKVNRKELEKREIVFNRRKPNHLQLTEIEDQVLRIWEETLKVSGFGPEDGFFDAGGDSLLAVAVAERIKKEFDCEFHVTELFEYSTIRAISEYILEMKNSDLAGTQNEDDHDDKKDGKYPKQKIPPYFDDSVAIVGISCQFPGAKNHHDFWNHIKEGKESIRFFSEEELRANGVPEELIQHPDYVPVQSVIEGKDLFDPGFFQISPKDAEYMDPQLRLLLLHSWKAIEDAGYVAKEIPATSVYMSASSNSYRTLLPKETTEGHESPDGYVSWVLAQSGTIPTMISHKLGLKGPSYFVHSNCSSSLVGLYQAYKSLTSGESQYALVGGATLHAQSAIGYVHQNGLNFSSDGHVKAFDASADGMAGGEGVAVILLKKAVDAVKDGDHIYAIMRGIGINNDGAEKAGFYAPSVKGQTEVIQHVLDTTKIHPETVSYIEAHGTGTKLGDPIEMSALNKVYKQYTDKTQFCGIGSVKTNIGHLDTAAGLAGCIKVAMSLYHNELAPTINCTEPNPDIKFESSPFYVVRERKSLEKHAGVHRAALSSFGLGGTNAHAIFEQYENISDAGAENEGNQPYIIPISAKNSERLQVYAKEMLSYISQDEQRHFSLRDIAYTFQVGREAMDNRIVFIVNDLEEWKHQLEAFVTGKPLAEGCIQGEKTRMTSAEQLLGNAEADDMASSRISKEELRKLAEMWANGFHVEWRRLYPNIKPRRISLPTYPFAEERYWPESSTGAITTIEPSRLHPLVHHNTSVLSEQRFSSIFTGQEYFIAEHIIKGMAILPAAVTLEMARAAIEQGIGGLEDHETGIRLKNVVWVRPVVAGSEPVQVNIGLYDEDGGHIAYRMYGDPESADAEPVVYNQGKAELIQLKREKALDLSKIKKQCDQSKMDAASFYEGMIGADYGPGYKSVEAVYKGDGQLLAKLSLPESVAHTLGDYVLHPSVMDGALQAAEYLQNVVRAELSDTEDFKAALPFALEELEVFRQCVSDMWVYVQFNSKNKPGDLIQKVDIHLCDEHGMICVRLKGFSTRVMEADIQTEPSKINAETLLLQPVWQEQKAANSLAAKKYAEHLVFLCEYDHETRKQIEAAIEDVHVYSLEARPSSVDGRFHSYTEQVFKKVQEIIRTKPKDGILVQIVTSAEGEQQLFSGLTGLLKTACQENAKLTGQMIEVSSEESGESIAGKLLENQMSSDSYVKYQNGTRYIADWREIKQAKGDGSKPWKDNGVYLISGGAGGLGHIFAKEIAEQTKNATVILAGRSPLSESKSKKLKELHSKGADITYRQTDVTNKIEVYQLIDDIQKRYGRLNGILHSAGIIKDSYLVNKQAKDLHDVLAPKVKGLVYLDEASKDLPLDFFILFSSLSGSLGSIGQSDYAAANVFMDMYAGYRNRLADLSQRHGQTLSVNWPLWRDGGMQVDQETEKRLVQLAGIVPMRAEKGIQALYQALHSEANQVMVIEGDVQKIKQNMLAKNASAPMEKKEAEHMTEQINSIDADSLLDKVKAMLKREIAKLLKVKLETIDDHAEMTVYGFDSISMTEFTNHINRAYQLELTPTVFFDHPTIHAFGKHLSEEYQSVFAKTFAVRAVSAQLQPAAKQEQAVRAKAKRRRKQQVMLPNAIQSDAGPEPIAIVGISGIFPMAKDVEAYWNILKEGKDCMTEIPKDRWDWREYEGDPAKEVNKTNVKWGGFIDGIADFDPLFFGISPREAEQMEPQQRLLLTYAWKAIEDAGYSAKRLSGTKTGVFIGTGNTGYSSLLSKANSAIEGSAAANTSPSVGPNRVSYFLNLHGPSEPVDTACSSSLVAIHHAISSIEEGTCDMALAGGVNTIILPEVYISFDKAGALSKEGKCKTFSNQADGFAHGEGAGILFLKKLKAAEEAGDHIYGVIKGSAINHGGRAASLTTPNPKAQADVIQSAYQKAGIDPKTVTYIEAHGTGTELGDPVEINGLKSAFKALGVNEGDTSANPYCGLGSVKTNIGHLSLAAGAAGVIKILLQLKHKTLVKSLHCENVNPYIQLKNSPFYIVRETEEWKALKNEQGEELPRRAGVSSFGIGGVNAHVIIEEYIPEASDENIPSIAPEHPGIFVLSAKNEARLKEHAQQLADALDKQTYSDVNLARIAYTLQAGRDAMEERLGIISGSIEDLQKKLKDFAAEKSGVEDVFKGRIDKGTLQMLTEDEEIQEAVEKWMERGKYAKLLELWVKGLDVDWTKLYGENLPKRISLPTYPFAKDRYWISDHIEKSGSIDANQAASRLGGAVLHPLMHQNTSNLSEQRFSSIYTGEEFFLADHVVKGQRILPGVAHLELARAAVEQAAEVQGVPRIMKLKNAVWVRPIVVEDQPQQVHIRLLPGENGEISYEIYGHSDVTGEQSIVYSQGSAVLNPAENLPAVDLQSLREQCQESHFSVNEVYDTYRMIGFEYGPAYRGVKKIYTAEQFVLAKLSLHPSAADTLSQYKMHPGLMDSALQASSILTGAGDNQLTLPFAVQELEVFGACSSEMWVYARYSQGSKATDKVQKRDMDILDESGNVCVRMKGLSFRAAEGGSGSAESDQTLATLMFEEKWVPKDFKKESPEPHYERHIVMLCDMNGLSKDRIESRMTGAECIVLESFREGLAERFQDYAEQALETVQGLLKSRPQGNVLIQLLTSAQRKQYSFSGLSALLKTAGLENKKLIGQTIEIDSHENVESVIEKLKENKRHTEDQHIKYEKGKRYINDLDEMQIDDREISMPWRDKGVYLITGGAGGLGFIFAKEIARQAEQPVLILTGRSALNADQQAELNELQQLGARAEYRQVDVTQTEAASELITSITSDYEDLNGVIHSAGLIKDNYLMSKTNEELTQVLAPKVKGLVNVDEATEHLALDFFILFSSISSVAGSAGQADYAMANAFMDSYAAYRNALVTAMYRHGQTLSINWPLWKEGGMRANKEIENMTLKNTGVTPMRTETGIQALYKGLAFGKDQVIVMEGFKDMMREKLTQKPSSDDVPMKTVQVRVTSEARMDQGNMFDHIQEVLKQTISQLLKIKPEEIDPDMEFNQYGFDSITLTEFANTLNEKCKLDLTPTVFFEHATVYAFAGYLSEEYPNAFTAQTPAKAEVLMQPVEQNIKNMTFSTENRFVKPSVTPMQKEADHKPEPIAIVGMSGVFPKAKDVEEYWKNLSSGADCITEVPKDRWDWQEYYGDPLKEANKTNVKWGGFIDEVADFDPLFFGISPLEAEQMEPQQRLLMTYAWKAVEEAGHSARSLAGTKTGIFIGTGNTGYSSLLSNVDIEGSAAANMSPSAGPNRVSYFLNIHGPSEPIDTACSSSLVAIHHAVCAIENGNCEMAIAGGVNTVVTPQGHIAYDKAGALSKEGRCKTFSDKADGFAVSEGAGILFLKKLTAAERDGDHIYGVIKGSAVNHGGRANSLTTPNPKAQADVVKTAYEKAGIDPRTVTYIEAHGTGTELGDPVEINGLKAAFKELYEKTGDPAVHGSHCGLGSAKTNIGHLSLAAGVAGVIKVLLQLKHKTLVKSLYSETVNPYIRLDDSPFYIVQESREWQALRDEAGRELPRRAGISSFGIGGVNAHVVIEEYIPKETTHPATAPAVTAQHPGIFILSAKDEDRLKDQARQLADFISKRSITARDLTDIAYTLQEGRDAMEERLGIIAVSTGDLLEKLNLFIEGGTNAKYMYRGRAEKGIAQTLRSDDEVQKTLNNSWEPHIYERLLDLWVKGMEIGWSKLYDGKQPKRISLPTYPFAKERYWITDTKEEAAAHQTALKTVESAALHPLIHVNTSDLSEQRFSSAFTGAEFFFADHKVKGKPVMPGVAYLEMVHAAVTRAVRRTEDQQSVIHIKNVVWVQPIVADGQPVQVDISLNPQQDGEIAFNVYTEAAHNDRKIHCQGSASIRGAGDIPVQDISALQDQCSLSTLSHDQCYELFKAIGIDYGPGFQGIDRLYIGRNQALAELSLPAGVTHTLNEFVLHPSMADSALQASIGLKLNSGDEQLSLPFALQELEIFSPCTNKMWVSVTSRPNEDKIQRLDIDLCDEQGRVCVRIKGITSRLLEEGIQPPDGPTSLGNSKATLNGALLMAPIWDRVQLEKRSISPADERVVILGGDDNSRKAVQREFPFAKELYIEPNASIHRITGQLEALGSFDHIVWMSPSRVTECEVGDEMIEAQDQGVIQMYRLIKAMLSLGYGQKEISWTIVTVNTQYVDQHDIVDPVDAGVHGLIGSMSKEYPNWQTKLIDVKKYEDLPLSQLLSLPADQEGNTWAYRNKIWHKLRLIPVHNNQPVHTKYKHGGVYVVIGGAGGIGEAWSEYMIRTYQAQIVWIGRRKKDAAIQSKLDRFARLGRAPYYIQADAANREELERAYETMKQTHREINGIIHSAIVLQDRSLMNMSEECFRNVLAAKVDVSVRMAQVFRHEPLDFVLFFSSVQSFARASGQSNYAAGCSFKDAFAQRLSQVWPCTVAVMNWSYWGSIGVVSSPDYQKRMAQAGIGSIEAPEAMEALELLLGGPLKQLVMMKMANETNDEAEQTEETIEVYPETHGSAIQKLRSYHPGDNTKIQQLL</sequence>
<comment type="function">
    <text evidence="5 7">Involved in some intermediate steps for the synthesis of the antibiotic polyketide bacillaene which is involved in secondary metabolism.</text>
</comment>
<comment type="cofactor">
    <cofactor evidence="8">
        <name>pantetheine 4'-phosphate</name>
        <dbReference type="ChEBI" id="CHEBI:47942"/>
    </cofactor>
    <text evidence="8">Binds 3 phosphopantetheines covalently.</text>
</comment>
<comment type="pathway">
    <text>Antibiotic biosynthesis; bacillaene biosynthesis.</text>
</comment>
<comment type="subcellular location">
    <subcellularLocation>
        <location evidence="6">Cytoplasm</location>
    </subcellularLocation>
</comment>
<comment type="miscellaneous">
    <text>The acyl carrier 1 domain binds alanine.</text>
</comment>
<comment type="similarity">
    <text evidence="8">Belongs to the ATP-dependent AMP-binding enzyme family.</text>
</comment>
<gene>
    <name type="primary">pksN</name>
    <name type="ordered locus">BSU17210</name>
</gene>
<feature type="chain" id="PRO_0000379566" description="Polyketide synthase PksN">
    <location>
        <begin position="1"/>
        <end position="5488"/>
    </location>
</feature>
<feature type="repeat" description="WD 1">
    <location>
        <begin position="165"/>
        <end position="205"/>
    </location>
</feature>
<feature type="repeat" description="WD 2">
    <location>
        <begin position="965"/>
        <end position="1006"/>
    </location>
</feature>
<feature type="domain" description="Carrier 1" evidence="2">
    <location>
        <begin position="983"/>
        <end position="1058"/>
    </location>
</feature>
<feature type="domain" description="Ketosynthase family 3 (KS3) 1" evidence="3">
    <location>
        <begin position="1089"/>
        <end position="1515"/>
    </location>
</feature>
<feature type="domain" description="PKS/mFAS DH 1" evidence="4">
    <location>
        <begin position="1700"/>
        <end position="1992"/>
    </location>
</feature>
<feature type="repeat" description="WD 3">
    <location>
        <begin position="2165"/>
        <end position="2204"/>
    </location>
</feature>
<feature type="domain" description="Carrier 2" evidence="2">
    <location>
        <begin position="2448"/>
        <end position="2525"/>
    </location>
</feature>
<feature type="domain" description="Ketosynthase family 3 (KS3) 2" evidence="3">
    <location>
        <begin position="2576"/>
        <end position="3012"/>
    </location>
</feature>
<feature type="domain" description="PKS/mFAS DH 2" evidence="4">
    <location>
        <begin position="3207"/>
        <end position="3492"/>
    </location>
</feature>
<feature type="repeat" description="WD 4">
    <location>
        <begin position="3666"/>
        <end position="3705"/>
    </location>
</feature>
<feature type="domain" description="Carrier 3" evidence="2">
    <location>
        <begin position="3952"/>
        <end position="4026"/>
    </location>
</feature>
<feature type="domain" description="Ketosynthase family 3 (KS3) 3" evidence="3">
    <location>
        <begin position="4076"/>
        <end position="4511"/>
    </location>
</feature>
<feature type="domain" description="PKS/mFAS DH 3" evidence="4">
    <location>
        <begin position="4706"/>
        <end position="4988"/>
    </location>
</feature>
<feature type="repeat" description="WD 5">
    <location>
        <begin position="5206"/>
        <end position="5244"/>
    </location>
</feature>
<feature type="region of interest" description="Condensation">
    <location>
        <begin position="3"/>
        <end position="301"/>
    </location>
</feature>
<feature type="region of interest" description="Adenylation">
    <location>
        <begin position="493"/>
        <end position="903"/>
    </location>
</feature>
<feature type="region of interest" description="N-terminal hotdog fold 1" evidence="4">
    <location>
        <begin position="1700"/>
        <end position="1826"/>
    </location>
</feature>
<feature type="region of interest" description="C-terminal hotdog fold 1" evidence="4">
    <location>
        <begin position="1840"/>
        <end position="1992"/>
    </location>
</feature>
<feature type="region of interest" description="N-terminal hotdog fold 2" evidence="4">
    <location>
        <begin position="3207"/>
        <end position="3332"/>
    </location>
</feature>
<feature type="region of interest" description="C-terminal hotdog fold 2" evidence="4">
    <location>
        <begin position="3346"/>
        <end position="3492"/>
    </location>
</feature>
<feature type="region of interest" description="N-terminal hotdog fold 3" evidence="4">
    <location>
        <begin position="4706"/>
        <end position="4830"/>
    </location>
</feature>
<feature type="region of interest" description="C-terminal hotdog fold 3" evidence="4">
    <location>
        <begin position="4844"/>
        <end position="4988"/>
    </location>
</feature>
<feature type="coiled-coil region" evidence="1">
    <location>
        <begin position="3038"/>
        <end position="3109"/>
    </location>
</feature>
<feature type="coiled-coil region" evidence="1">
    <location>
        <begin position="3626"/>
        <end position="3655"/>
    </location>
</feature>
<feature type="coiled-coil region" evidence="1">
    <location>
        <begin position="5275"/>
        <end position="5303"/>
    </location>
</feature>
<feature type="active site" description="For beta-ketoacyl synthase 1 activity" evidence="3">
    <location>
        <position position="1261"/>
    </location>
</feature>
<feature type="active site" description="For beta-ketoacyl synthase 1 activity" evidence="3">
    <location>
        <position position="1397"/>
    </location>
</feature>
<feature type="active site" description="For beta-ketoacyl synthase 1 activity" evidence="3">
    <location>
        <position position="1437"/>
    </location>
</feature>
<feature type="active site" description="Proton acceptor; for dehydratase activity 1" evidence="4">
    <location>
        <position position="1729"/>
    </location>
</feature>
<feature type="active site" description="Proton donor; for dehydratase activity 1" evidence="4">
    <location>
        <position position="1900"/>
    </location>
</feature>
<feature type="active site" description="For beta-ketoacyl synthase 2 activity" evidence="3">
    <location>
        <position position="2747"/>
    </location>
</feature>
<feature type="active site" description="For beta-ketoacyl synthase 2 activity" evidence="3">
    <location>
        <position position="2882"/>
    </location>
</feature>
<feature type="active site" description="For beta-ketoacyl synthase 2 activity" evidence="3">
    <location>
        <position position="2928"/>
    </location>
</feature>
<feature type="active site" description="Proton acceptor; for dehydratase activity 2" evidence="4">
    <location>
        <position position="3236"/>
    </location>
</feature>
<feature type="active site" description="Proton donor; for dehydratase activity 2" evidence="4">
    <location>
        <position position="3408"/>
    </location>
</feature>
<feature type="active site" description="For beta-ketoacyl synthase 3 activity" evidence="3">
    <location>
        <position position="4245"/>
    </location>
</feature>
<feature type="active site" description="For beta-ketoacyl synthase 3 activity" evidence="3">
    <location>
        <position position="4380"/>
    </location>
</feature>
<feature type="active site" description="For beta-ketoacyl synthase 3 activity" evidence="3">
    <location>
        <position position="4427"/>
    </location>
</feature>
<feature type="active site" description="Proton acceptor; for dehydratase activity 3" evidence="4">
    <location>
        <position position="4735"/>
    </location>
</feature>
<feature type="active site" description="Proton donor; for dehydratase activity 3" evidence="4">
    <location>
        <position position="4906"/>
    </location>
</feature>
<feature type="modified residue" description="O-(pantetheine 4'-phosphoryl)serine" evidence="2 5">
    <location>
        <position position="1018"/>
    </location>
</feature>
<feature type="modified residue" description="O-(pantetheine 4'-phosphoryl)serine" evidence="2">
    <location>
        <position position="2485"/>
    </location>
</feature>
<feature type="modified residue" description="O-(pantetheine 4'-phosphoryl)serine" evidence="2">
    <location>
        <position position="3986"/>
    </location>
</feature>
<keyword id="KW-0012">Acyltransferase</keyword>
<keyword id="KW-0175">Coiled coil</keyword>
<keyword id="KW-0963">Cytoplasm</keyword>
<keyword id="KW-0436">Ligase</keyword>
<keyword id="KW-0511">Multifunctional enzyme</keyword>
<keyword id="KW-0521">NADP</keyword>
<keyword id="KW-0596">Phosphopantetheine</keyword>
<keyword id="KW-0597">Phosphoprotein</keyword>
<keyword id="KW-1185">Reference proteome</keyword>
<keyword id="KW-0677">Repeat</keyword>
<keyword id="KW-0808">Transferase</keyword>
<keyword id="KW-0853">WD repeat</keyword>
<protein>
    <recommendedName>
        <fullName>Polyketide synthase PksN</fullName>
        <ecNumber>2.3.1.-</ecNumber>
    </recommendedName>
</protein>